<accession>Q6G733</accession>
<dbReference type="EC" id="3.5.1.5" evidence="1"/>
<dbReference type="EMBL" id="BX571857">
    <property type="protein sequence ID" value="CAG43990.1"/>
    <property type="molecule type" value="Genomic_DNA"/>
</dbReference>
<dbReference type="RefSeq" id="WP_000612128.1">
    <property type="nucleotide sequence ID" value="NC_002953.3"/>
</dbReference>
<dbReference type="SMR" id="Q6G733"/>
<dbReference type="KEGG" id="sas:SAS2179"/>
<dbReference type="HOGENOM" id="CLU_129707_2_2_9"/>
<dbReference type="UniPathway" id="UPA00258">
    <property type="reaction ID" value="UER00370"/>
</dbReference>
<dbReference type="GO" id="GO:0035550">
    <property type="term" value="C:urease complex"/>
    <property type="evidence" value="ECO:0007669"/>
    <property type="project" value="InterPro"/>
</dbReference>
<dbReference type="GO" id="GO:0009039">
    <property type="term" value="F:urease activity"/>
    <property type="evidence" value="ECO:0007669"/>
    <property type="project" value="UniProtKB-UniRule"/>
</dbReference>
<dbReference type="GO" id="GO:0043419">
    <property type="term" value="P:urea catabolic process"/>
    <property type="evidence" value="ECO:0007669"/>
    <property type="project" value="UniProtKB-UniRule"/>
</dbReference>
<dbReference type="CDD" id="cd00407">
    <property type="entry name" value="Urease_beta"/>
    <property type="match status" value="1"/>
</dbReference>
<dbReference type="FunFam" id="2.10.150.10:FF:000001">
    <property type="entry name" value="Urease subunit beta"/>
    <property type="match status" value="1"/>
</dbReference>
<dbReference type="Gene3D" id="2.10.150.10">
    <property type="entry name" value="Urease, beta subunit"/>
    <property type="match status" value="1"/>
</dbReference>
<dbReference type="HAMAP" id="MF_01954">
    <property type="entry name" value="Urease_beta"/>
    <property type="match status" value="1"/>
</dbReference>
<dbReference type="InterPro" id="IPR002019">
    <property type="entry name" value="Urease_beta-like"/>
</dbReference>
<dbReference type="InterPro" id="IPR036461">
    <property type="entry name" value="Urease_betasu_sf"/>
</dbReference>
<dbReference type="InterPro" id="IPR050069">
    <property type="entry name" value="Urease_subunit"/>
</dbReference>
<dbReference type="NCBIfam" id="NF009682">
    <property type="entry name" value="PRK13203.1"/>
    <property type="match status" value="1"/>
</dbReference>
<dbReference type="NCBIfam" id="TIGR00192">
    <property type="entry name" value="urease_beta"/>
    <property type="match status" value="1"/>
</dbReference>
<dbReference type="PANTHER" id="PTHR33569">
    <property type="entry name" value="UREASE"/>
    <property type="match status" value="1"/>
</dbReference>
<dbReference type="PANTHER" id="PTHR33569:SF1">
    <property type="entry name" value="UREASE"/>
    <property type="match status" value="1"/>
</dbReference>
<dbReference type="Pfam" id="PF00699">
    <property type="entry name" value="Urease_beta"/>
    <property type="match status" value="1"/>
</dbReference>
<dbReference type="SUPFAM" id="SSF51278">
    <property type="entry name" value="Urease, beta-subunit"/>
    <property type="match status" value="1"/>
</dbReference>
<reference key="1">
    <citation type="journal article" date="2004" name="Proc. Natl. Acad. Sci. U.S.A.">
        <title>Complete genomes of two clinical Staphylococcus aureus strains: evidence for the rapid evolution of virulence and drug resistance.</title>
        <authorList>
            <person name="Holden M.T.G."/>
            <person name="Feil E.J."/>
            <person name="Lindsay J.A."/>
            <person name="Peacock S.J."/>
            <person name="Day N.P.J."/>
            <person name="Enright M.C."/>
            <person name="Foster T.J."/>
            <person name="Moore C.E."/>
            <person name="Hurst L."/>
            <person name="Atkin R."/>
            <person name="Barron A."/>
            <person name="Bason N."/>
            <person name="Bentley S.D."/>
            <person name="Chillingworth C."/>
            <person name="Chillingworth T."/>
            <person name="Churcher C."/>
            <person name="Clark L."/>
            <person name="Corton C."/>
            <person name="Cronin A."/>
            <person name="Doggett J."/>
            <person name="Dowd L."/>
            <person name="Feltwell T."/>
            <person name="Hance Z."/>
            <person name="Harris B."/>
            <person name="Hauser H."/>
            <person name="Holroyd S."/>
            <person name="Jagels K."/>
            <person name="James K.D."/>
            <person name="Lennard N."/>
            <person name="Line A."/>
            <person name="Mayes R."/>
            <person name="Moule S."/>
            <person name="Mungall K."/>
            <person name="Ormond D."/>
            <person name="Quail M.A."/>
            <person name="Rabbinowitsch E."/>
            <person name="Rutherford K.M."/>
            <person name="Sanders M."/>
            <person name="Sharp S."/>
            <person name="Simmonds M."/>
            <person name="Stevens K."/>
            <person name="Whitehead S."/>
            <person name="Barrell B.G."/>
            <person name="Spratt B.G."/>
            <person name="Parkhill J."/>
        </authorList>
    </citation>
    <scope>NUCLEOTIDE SEQUENCE [LARGE SCALE GENOMIC DNA]</scope>
    <source>
        <strain>MSSA476</strain>
    </source>
</reference>
<proteinExistence type="inferred from homology"/>
<keyword id="KW-0963">Cytoplasm</keyword>
<keyword id="KW-0378">Hydrolase</keyword>
<protein>
    <recommendedName>
        <fullName evidence="1">Urease subunit beta</fullName>
        <ecNumber evidence="1">3.5.1.5</ecNumber>
    </recommendedName>
    <alternativeName>
        <fullName evidence="1">Urea amidohydrolase subunit beta</fullName>
    </alternativeName>
</protein>
<organism>
    <name type="scientific">Staphylococcus aureus (strain MSSA476)</name>
    <dbReference type="NCBI Taxonomy" id="282459"/>
    <lineage>
        <taxon>Bacteria</taxon>
        <taxon>Bacillati</taxon>
        <taxon>Bacillota</taxon>
        <taxon>Bacilli</taxon>
        <taxon>Bacillales</taxon>
        <taxon>Staphylococcaceae</taxon>
        <taxon>Staphylococcus</taxon>
    </lineage>
</organism>
<feature type="chain" id="PRO_0000067591" description="Urease subunit beta">
    <location>
        <begin position="1"/>
        <end position="136"/>
    </location>
</feature>
<feature type="region of interest" description="Disordered" evidence="2">
    <location>
        <begin position="113"/>
        <end position="136"/>
    </location>
</feature>
<name>URE2_STAAS</name>
<sequence>MIPGEIITKSTEVEINNHHPETVIEVENTGDRPIQVGSHFHFYEANAALDFEREMAYGKHLDIPAGAAVRFEPGDKKEVQLVEYAGKRKIFGFRGMVNGPIDESRVYRPTDENDEYAGVFGDNGAENVNKKGGKRS</sequence>
<gene>
    <name evidence="1" type="primary">ureB</name>
    <name type="ordered locus">SAS2179</name>
</gene>
<comment type="catalytic activity">
    <reaction evidence="1">
        <text>urea + 2 H2O + H(+) = hydrogencarbonate + 2 NH4(+)</text>
        <dbReference type="Rhea" id="RHEA:20557"/>
        <dbReference type="ChEBI" id="CHEBI:15377"/>
        <dbReference type="ChEBI" id="CHEBI:15378"/>
        <dbReference type="ChEBI" id="CHEBI:16199"/>
        <dbReference type="ChEBI" id="CHEBI:17544"/>
        <dbReference type="ChEBI" id="CHEBI:28938"/>
        <dbReference type="EC" id="3.5.1.5"/>
    </reaction>
</comment>
<comment type="pathway">
    <text evidence="1">Nitrogen metabolism; urea degradation; CO(2) and NH(3) from urea (urease route): step 1/1.</text>
</comment>
<comment type="subunit">
    <text evidence="1">Heterotrimer of UreA (gamma), UreB (beta) and UreC (alpha) subunits. Three heterotrimers associate to form the active enzyme.</text>
</comment>
<comment type="subcellular location">
    <subcellularLocation>
        <location evidence="1">Cytoplasm</location>
    </subcellularLocation>
</comment>
<comment type="similarity">
    <text evidence="1">Belongs to the urease beta subunit family.</text>
</comment>
<evidence type="ECO:0000255" key="1">
    <source>
        <dbReference type="HAMAP-Rule" id="MF_01954"/>
    </source>
</evidence>
<evidence type="ECO:0000256" key="2">
    <source>
        <dbReference type="SAM" id="MobiDB-lite"/>
    </source>
</evidence>